<evidence type="ECO:0000255" key="1">
    <source>
        <dbReference type="HAMAP-Rule" id="MF_00248"/>
    </source>
</evidence>
<dbReference type="EC" id="3.4.25.2" evidence="1"/>
<dbReference type="EMBL" id="CP000702">
    <property type="protein sequence ID" value="ABQ46426.1"/>
    <property type="molecule type" value="Genomic_DNA"/>
</dbReference>
<dbReference type="RefSeq" id="WP_011943053.1">
    <property type="nucleotide sequence ID" value="NC_009486.1"/>
</dbReference>
<dbReference type="SMR" id="A5IJQ3"/>
<dbReference type="STRING" id="390874.Tpet_0400"/>
<dbReference type="MEROPS" id="T01.006"/>
<dbReference type="KEGG" id="tpt:Tpet_0400"/>
<dbReference type="eggNOG" id="COG5405">
    <property type="taxonomic scope" value="Bacteria"/>
</dbReference>
<dbReference type="HOGENOM" id="CLU_093872_1_0_0"/>
<dbReference type="Proteomes" id="UP000006558">
    <property type="component" value="Chromosome"/>
</dbReference>
<dbReference type="GO" id="GO:0009376">
    <property type="term" value="C:HslUV protease complex"/>
    <property type="evidence" value="ECO:0007669"/>
    <property type="project" value="UniProtKB-UniRule"/>
</dbReference>
<dbReference type="GO" id="GO:0005839">
    <property type="term" value="C:proteasome core complex"/>
    <property type="evidence" value="ECO:0007669"/>
    <property type="project" value="InterPro"/>
</dbReference>
<dbReference type="GO" id="GO:0046872">
    <property type="term" value="F:metal ion binding"/>
    <property type="evidence" value="ECO:0007669"/>
    <property type="project" value="UniProtKB-KW"/>
</dbReference>
<dbReference type="GO" id="GO:0004298">
    <property type="term" value="F:threonine-type endopeptidase activity"/>
    <property type="evidence" value="ECO:0007669"/>
    <property type="project" value="UniProtKB-KW"/>
</dbReference>
<dbReference type="GO" id="GO:0051603">
    <property type="term" value="P:proteolysis involved in protein catabolic process"/>
    <property type="evidence" value="ECO:0007669"/>
    <property type="project" value="InterPro"/>
</dbReference>
<dbReference type="CDD" id="cd01913">
    <property type="entry name" value="protease_HslV"/>
    <property type="match status" value="1"/>
</dbReference>
<dbReference type="FunFam" id="3.60.20.10:FF:000002">
    <property type="entry name" value="ATP-dependent protease subunit HslV"/>
    <property type="match status" value="1"/>
</dbReference>
<dbReference type="Gene3D" id="3.60.20.10">
    <property type="entry name" value="Glutamine Phosphoribosylpyrophosphate, subunit 1, domain 1"/>
    <property type="match status" value="1"/>
</dbReference>
<dbReference type="HAMAP" id="MF_00248">
    <property type="entry name" value="HslV"/>
    <property type="match status" value="1"/>
</dbReference>
<dbReference type="InterPro" id="IPR022281">
    <property type="entry name" value="ATP-dep_Prtase_HsIV_su"/>
</dbReference>
<dbReference type="InterPro" id="IPR029055">
    <property type="entry name" value="Ntn_hydrolases_N"/>
</dbReference>
<dbReference type="InterPro" id="IPR001353">
    <property type="entry name" value="Proteasome_sua/b"/>
</dbReference>
<dbReference type="InterPro" id="IPR023333">
    <property type="entry name" value="Proteasome_suB-type"/>
</dbReference>
<dbReference type="NCBIfam" id="TIGR03692">
    <property type="entry name" value="ATP_dep_HslV"/>
    <property type="match status" value="1"/>
</dbReference>
<dbReference type="NCBIfam" id="NF003964">
    <property type="entry name" value="PRK05456.1"/>
    <property type="match status" value="1"/>
</dbReference>
<dbReference type="PANTHER" id="PTHR32194:SF0">
    <property type="entry name" value="ATP-DEPENDENT PROTEASE SUBUNIT HSLV"/>
    <property type="match status" value="1"/>
</dbReference>
<dbReference type="PANTHER" id="PTHR32194">
    <property type="entry name" value="METALLOPROTEASE TLDD"/>
    <property type="match status" value="1"/>
</dbReference>
<dbReference type="Pfam" id="PF00227">
    <property type="entry name" value="Proteasome"/>
    <property type="match status" value="1"/>
</dbReference>
<dbReference type="PIRSF" id="PIRSF039093">
    <property type="entry name" value="HslV"/>
    <property type="match status" value="1"/>
</dbReference>
<dbReference type="SUPFAM" id="SSF56235">
    <property type="entry name" value="N-terminal nucleophile aminohydrolases (Ntn hydrolases)"/>
    <property type="match status" value="1"/>
</dbReference>
<dbReference type="PROSITE" id="PS51476">
    <property type="entry name" value="PROTEASOME_BETA_2"/>
    <property type="match status" value="1"/>
</dbReference>
<name>HSLV_THEP1</name>
<sequence>MKFHGTTILVVRRNGQTVMGGDGQVTFGSTVLKGNARKVRKLGEGKVLAGFAGSVADAMTLFDRFEAKLREWGGNLTKAAVELAKDWRTDRVLRRLEALLLVADKENIFIISGNGEVIQPDDDAAAIGSGGPYALAAAKALLRNTDLSAREIVEKAMMIAGEICIYTNQNIVIEEV</sequence>
<reference key="1">
    <citation type="submission" date="2007-05" db="EMBL/GenBank/DDBJ databases">
        <title>Complete sequence of Thermotoga petrophila RKU-1.</title>
        <authorList>
            <consortium name="US DOE Joint Genome Institute"/>
            <person name="Copeland A."/>
            <person name="Lucas S."/>
            <person name="Lapidus A."/>
            <person name="Barry K."/>
            <person name="Glavina del Rio T."/>
            <person name="Dalin E."/>
            <person name="Tice H."/>
            <person name="Pitluck S."/>
            <person name="Sims D."/>
            <person name="Brettin T."/>
            <person name="Bruce D."/>
            <person name="Detter J.C."/>
            <person name="Han C."/>
            <person name="Tapia R."/>
            <person name="Schmutz J."/>
            <person name="Larimer F."/>
            <person name="Land M."/>
            <person name="Hauser L."/>
            <person name="Kyrpides N."/>
            <person name="Mikhailova N."/>
            <person name="Nelson K."/>
            <person name="Gogarten J.P."/>
            <person name="Noll K."/>
            <person name="Richardson P."/>
        </authorList>
    </citation>
    <scope>NUCLEOTIDE SEQUENCE [LARGE SCALE GENOMIC DNA]</scope>
    <source>
        <strain>ATCC BAA-488 / DSM 13995 / JCM 10881 / RKU-1</strain>
    </source>
</reference>
<accession>A5IJQ3</accession>
<protein>
    <recommendedName>
        <fullName evidence="1">ATP-dependent protease subunit HslV</fullName>
        <ecNumber evidence="1">3.4.25.2</ecNumber>
    </recommendedName>
</protein>
<proteinExistence type="inferred from homology"/>
<feature type="chain" id="PRO_0000336802" description="ATP-dependent protease subunit HslV">
    <location>
        <begin position="1"/>
        <end position="176"/>
    </location>
</feature>
<feature type="active site" evidence="1">
    <location>
        <position position="6"/>
    </location>
</feature>
<feature type="binding site" evidence="1">
    <location>
        <position position="161"/>
    </location>
    <ligand>
        <name>Na(+)</name>
        <dbReference type="ChEBI" id="CHEBI:29101"/>
    </ligand>
</feature>
<feature type="binding site" evidence="1">
    <location>
        <position position="164"/>
    </location>
    <ligand>
        <name>Na(+)</name>
        <dbReference type="ChEBI" id="CHEBI:29101"/>
    </ligand>
</feature>
<feature type="binding site" evidence="1">
    <location>
        <position position="167"/>
    </location>
    <ligand>
        <name>Na(+)</name>
        <dbReference type="ChEBI" id="CHEBI:29101"/>
    </ligand>
</feature>
<comment type="function">
    <text evidence="1">Protease subunit of a proteasome-like degradation complex believed to be a general protein degrading machinery.</text>
</comment>
<comment type="catalytic activity">
    <reaction evidence="1">
        <text>ATP-dependent cleavage of peptide bonds with broad specificity.</text>
        <dbReference type="EC" id="3.4.25.2"/>
    </reaction>
</comment>
<comment type="activity regulation">
    <text evidence="1">Allosterically activated by HslU binding.</text>
</comment>
<comment type="subunit">
    <text evidence="1">A double ring-shaped homohexamer of HslV is capped on each side by a ring-shaped HslU homohexamer. The assembly of the HslU/HslV complex is dependent on binding of ATP.</text>
</comment>
<comment type="subcellular location">
    <subcellularLocation>
        <location evidence="1">Cytoplasm</location>
    </subcellularLocation>
</comment>
<comment type="similarity">
    <text evidence="1">Belongs to the peptidase T1B family. HslV subfamily.</text>
</comment>
<organism>
    <name type="scientific">Thermotoga petrophila (strain ATCC BAA-488 / DSM 13995 / JCM 10881 / RKU-1)</name>
    <dbReference type="NCBI Taxonomy" id="390874"/>
    <lineage>
        <taxon>Bacteria</taxon>
        <taxon>Thermotogati</taxon>
        <taxon>Thermotogota</taxon>
        <taxon>Thermotogae</taxon>
        <taxon>Thermotogales</taxon>
        <taxon>Thermotogaceae</taxon>
        <taxon>Thermotoga</taxon>
    </lineage>
</organism>
<gene>
    <name evidence="1" type="primary">hslV</name>
    <name type="ordered locus">Tpet_0400</name>
</gene>
<keyword id="KW-0021">Allosteric enzyme</keyword>
<keyword id="KW-0963">Cytoplasm</keyword>
<keyword id="KW-0378">Hydrolase</keyword>
<keyword id="KW-0479">Metal-binding</keyword>
<keyword id="KW-0645">Protease</keyword>
<keyword id="KW-0915">Sodium</keyword>
<keyword id="KW-0888">Threonine protease</keyword>